<dbReference type="EC" id="7.1.2.2" evidence="1"/>
<dbReference type="EMBL" id="CP000885">
    <property type="protein sequence ID" value="ABX44083.1"/>
    <property type="molecule type" value="Genomic_DNA"/>
</dbReference>
<dbReference type="RefSeq" id="WP_012201731.1">
    <property type="nucleotide sequence ID" value="NC_010001.1"/>
</dbReference>
<dbReference type="SMR" id="A9KK92"/>
<dbReference type="STRING" id="357809.Cphy_3736"/>
<dbReference type="KEGG" id="cpy:Cphy_3736"/>
<dbReference type="eggNOG" id="COG0055">
    <property type="taxonomic scope" value="Bacteria"/>
</dbReference>
<dbReference type="HOGENOM" id="CLU_022398_0_2_9"/>
<dbReference type="Proteomes" id="UP000000370">
    <property type="component" value="Chromosome"/>
</dbReference>
<dbReference type="GO" id="GO:0005886">
    <property type="term" value="C:plasma membrane"/>
    <property type="evidence" value="ECO:0007669"/>
    <property type="project" value="UniProtKB-SubCell"/>
</dbReference>
<dbReference type="GO" id="GO:0045259">
    <property type="term" value="C:proton-transporting ATP synthase complex"/>
    <property type="evidence" value="ECO:0007669"/>
    <property type="project" value="UniProtKB-KW"/>
</dbReference>
<dbReference type="GO" id="GO:0005524">
    <property type="term" value="F:ATP binding"/>
    <property type="evidence" value="ECO:0007669"/>
    <property type="project" value="UniProtKB-UniRule"/>
</dbReference>
<dbReference type="GO" id="GO:0016887">
    <property type="term" value="F:ATP hydrolysis activity"/>
    <property type="evidence" value="ECO:0007669"/>
    <property type="project" value="InterPro"/>
</dbReference>
<dbReference type="GO" id="GO:0046933">
    <property type="term" value="F:proton-transporting ATP synthase activity, rotational mechanism"/>
    <property type="evidence" value="ECO:0007669"/>
    <property type="project" value="UniProtKB-UniRule"/>
</dbReference>
<dbReference type="CDD" id="cd18110">
    <property type="entry name" value="ATP-synt_F1_beta_C"/>
    <property type="match status" value="1"/>
</dbReference>
<dbReference type="CDD" id="cd18115">
    <property type="entry name" value="ATP-synt_F1_beta_N"/>
    <property type="match status" value="1"/>
</dbReference>
<dbReference type="CDD" id="cd01133">
    <property type="entry name" value="F1-ATPase_beta_CD"/>
    <property type="match status" value="1"/>
</dbReference>
<dbReference type="FunFam" id="1.10.1140.10:FF:000001">
    <property type="entry name" value="ATP synthase subunit beta"/>
    <property type="match status" value="1"/>
</dbReference>
<dbReference type="FunFam" id="2.40.10.170:FF:000005">
    <property type="entry name" value="ATP synthase subunit beta"/>
    <property type="match status" value="1"/>
</dbReference>
<dbReference type="FunFam" id="3.40.50.300:FF:000004">
    <property type="entry name" value="ATP synthase subunit beta"/>
    <property type="match status" value="1"/>
</dbReference>
<dbReference type="Gene3D" id="2.40.10.170">
    <property type="match status" value="1"/>
</dbReference>
<dbReference type="Gene3D" id="1.10.1140.10">
    <property type="entry name" value="Bovine Mitochondrial F1-atpase, Atp Synthase Beta Chain, Chain D, domain 3"/>
    <property type="match status" value="1"/>
</dbReference>
<dbReference type="Gene3D" id="3.40.50.300">
    <property type="entry name" value="P-loop containing nucleotide triphosphate hydrolases"/>
    <property type="match status" value="1"/>
</dbReference>
<dbReference type="HAMAP" id="MF_01347">
    <property type="entry name" value="ATP_synth_beta_bact"/>
    <property type="match status" value="1"/>
</dbReference>
<dbReference type="InterPro" id="IPR003593">
    <property type="entry name" value="AAA+_ATPase"/>
</dbReference>
<dbReference type="InterPro" id="IPR055190">
    <property type="entry name" value="ATP-synt_VA_C"/>
</dbReference>
<dbReference type="InterPro" id="IPR005722">
    <property type="entry name" value="ATP_synth_F1_bsu"/>
</dbReference>
<dbReference type="InterPro" id="IPR020003">
    <property type="entry name" value="ATPase_a/bsu_AS"/>
</dbReference>
<dbReference type="InterPro" id="IPR050053">
    <property type="entry name" value="ATPase_alpha/beta_chains"/>
</dbReference>
<dbReference type="InterPro" id="IPR004100">
    <property type="entry name" value="ATPase_F1/V1/A1_a/bsu_N"/>
</dbReference>
<dbReference type="InterPro" id="IPR036121">
    <property type="entry name" value="ATPase_F1/V1/A1_a/bsu_N_sf"/>
</dbReference>
<dbReference type="InterPro" id="IPR000194">
    <property type="entry name" value="ATPase_F1/V1/A1_a/bsu_nucl-bd"/>
</dbReference>
<dbReference type="InterPro" id="IPR024034">
    <property type="entry name" value="ATPase_F1/V1_b/a_C"/>
</dbReference>
<dbReference type="InterPro" id="IPR027417">
    <property type="entry name" value="P-loop_NTPase"/>
</dbReference>
<dbReference type="NCBIfam" id="TIGR01039">
    <property type="entry name" value="atpD"/>
    <property type="match status" value="1"/>
</dbReference>
<dbReference type="PANTHER" id="PTHR15184">
    <property type="entry name" value="ATP SYNTHASE"/>
    <property type="match status" value="1"/>
</dbReference>
<dbReference type="PANTHER" id="PTHR15184:SF71">
    <property type="entry name" value="ATP SYNTHASE SUBUNIT BETA, MITOCHONDRIAL"/>
    <property type="match status" value="1"/>
</dbReference>
<dbReference type="Pfam" id="PF00006">
    <property type="entry name" value="ATP-synt_ab"/>
    <property type="match status" value="1"/>
</dbReference>
<dbReference type="Pfam" id="PF02874">
    <property type="entry name" value="ATP-synt_ab_N"/>
    <property type="match status" value="1"/>
</dbReference>
<dbReference type="Pfam" id="PF22919">
    <property type="entry name" value="ATP-synt_VA_C"/>
    <property type="match status" value="1"/>
</dbReference>
<dbReference type="SMART" id="SM00382">
    <property type="entry name" value="AAA"/>
    <property type="match status" value="1"/>
</dbReference>
<dbReference type="SUPFAM" id="SSF47917">
    <property type="entry name" value="C-terminal domain of alpha and beta subunits of F1 ATP synthase"/>
    <property type="match status" value="1"/>
</dbReference>
<dbReference type="SUPFAM" id="SSF50615">
    <property type="entry name" value="N-terminal domain of alpha and beta subunits of F1 ATP synthase"/>
    <property type="match status" value="1"/>
</dbReference>
<dbReference type="SUPFAM" id="SSF52540">
    <property type="entry name" value="P-loop containing nucleoside triphosphate hydrolases"/>
    <property type="match status" value="1"/>
</dbReference>
<dbReference type="PROSITE" id="PS00152">
    <property type="entry name" value="ATPASE_ALPHA_BETA"/>
    <property type="match status" value="1"/>
</dbReference>
<reference key="1">
    <citation type="submission" date="2007-11" db="EMBL/GenBank/DDBJ databases">
        <title>Complete genome sequence of Clostridium phytofermentans ISDg.</title>
        <authorList>
            <person name="Leschine S.B."/>
            <person name="Warnick T.A."/>
            <person name="Blanchard J.L."/>
            <person name="Schnell D.J."/>
            <person name="Petit E.L."/>
            <person name="LaTouf W.G."/>
            <person name="Copeland A."/>
            <person name="Lucas S."/>
            <person name="Lapidus A."/>
            <person name="Barry K."/>
            <person name="Glavina del Rio T."/>
            <person name="Dalin E."/>
            <person name="Tice H."/>
            <person name="Pitluck S."/>
            <person name="Kiss H."/>
            <person name="Brettin T."/>
            <person name="Bruce D."/>
            <person name="Detter J.C."/>
            <person name="Han C."/>
            <person name="Kuske C."/>
            <person name="Schmutz J."/>
            <person name="Larimer F."/>
            <person name="Land M."/>
            <person name="Hauser L."/>
            <person name="Kyrpides N."/>
            <person name="Kim E.A."/>
            <person name="Richardson P."/>
        </authorList>
    </citation>
    <scope>NUCLEOTIDE SEQUENCE [LARGE SCALE GENOMIC DNA]</scope>
    <source>
        <strain>ATCC 700394 / DSM 18823 / ISDg</strain>
    </source>
</reference>
<gene>
    <name evidence="1" type="primary">atpD</name>
    <name type="ordered locus">Cphy_3736</name>
</gene>
<proteinExistence type="inferred from homology"/>
<keyword id="KW-0066">ATP synthesis</keyword>
<keyword id="KW-0067">ATP-binding</keyword>
<keyword id="KW-1003">Cell membrane</keyword>
<keyword id="KW-0139">CF(1)</keyword>
<keyword id="KW-0375">Hydrogen ion transport</keyword>
<keyword id="KW-0406">Ion transport</keyword>
<keyword id="KW-0472">Membrane</keyword>
<keyword id="KW-0547">Nucleotide-binding</keyword>
<keyword id="KW-1185">Reference proteome</keyword>
<keyword id="KW-1278">Translocase</keyword>
<keyword id="KW-0813">Transport</keyword>
<organism>
    <name type="scientific">Lachnoclostridium phytofermentans (strain ATCC 700394 / DSM 18823 / ISDg)</name>
    <name type="common">Clostridium phytofermentans</name>
    <dbReference type="NCBI Taxonomy" id="357809"/>
    <lineage>
        <taxon>Bacteria</taxon>
        <taxon>Bacillati</taxon>
        <taxon>Bacillota</taxon>
        <taxon>Clostridia</taxon>
        <taxon>Lachnospirales</taxon>
        <taxon>Lachnospiraceae</taxon>
    </lineage>
</organism>
<protein>
    <recommendedName>
        <fullName evidence="1">ATP synthase subunit beta</fullName>
        <ecNumber evidence="1">7.1.2.2</ecNumber>
    </recommendedName>
    <alternativeName>
        <fullName evidence="1">ATP synthase F1 sector subunit beta</fullName>
    </alternativeName>
    <alternativeName>
        <fullName evidence="1">F-ATPase subunit beta</fullName>
    </alternativeName>
</protein>
<evidence type="ECO:0000255" key="1">
    <source>
        <dbReference type="HAMAP-Rule" id="MF_01347"/>
    </source>
</evidence>
<comment type="function">
    <text evidence="1">Produces ATP from ADP in the presence of a proton gradient across the membrane. The catalytic sites are hosted primarily by the beta subunits.</text>
</comment>
<comment type="catalytic activity">
    <reaction evidence="1">
        <text>ATP + H2O + 4 H(+)(in) = ADP + phosphate + 5 H(+)(out)</text>
        <dbReference type="Rhea" id="RHEA:57720"/>
        <dbReference type="ChEBI" id="CHEBI:15377"/>
        <dbReference type="ChEBI" id="CHEBI:15378"/>
        <dbReference type="ChEBI" id="CHEBI:30616"/>
        <dbReference type="ChEBI" id="CHEBI:43474"/>
        <dbReference type="ChEBI" id="CHEBI:456216"/>
        <dbReference type="EC" id="7.1.2.2"/>
    </reaction>
</comment>
<comment type="subunit">
    <text evidence="1">F-type ATPases have 2 components, CF(1) - the catalytic core - and CF(0) - the membrane proton channel. CF(1) has five subunits: alpha(3), beta(3), gamma(1), delta(1), epsilon(1). CF(0) has three main subunits: a(1), b(2) and c(9-12). The alpha and beta chains form an alternating ring which encloses part of the gamma chain. CF(1) is attached to CF(0) by a central stalk formed by the gamma and epsilon chains, while a peripheral stalk is formed by the delta and b chains.</text>
</comment>
<comment type="subcellular location">
    <subcellularLocation>
        <location evidence="1">Cell membrane</location>
        <topology evidence="1">Peripheral membrane protein</topology>
    </subcellularLocation>
</comment>
<comment type="similarity">
    <text evidence="1">Belongs to the ATPase alpha/beta chains family.</text>
</comment>
<sequence length="472" mass="51541">MADTNNKLKSGLGKITQIIGAVLDIKFAEGKLPEIYEAIKIKKNDGDTLVVEVAQHLGDDTVRCIAMGPTDGLVRGMDAEGTGAPISVPVGENTLGRMFNVLGNPIDEKEAPKNVEYYPIHRKAPAFEEQSTQTEILETGIKVVDLLCPYQKGGKIGLFGGAGVGKTVLIQELITNIATEHGGYSVFTGVGERTREGNDLYYEMIDSGVINKTTMVFGQMNEPPGARMRVGLTGLTMAEYFRDKSGKDVLLFIDNIFRFTQAGSEVSALLGRMPSAVGYQPTLQTEMGALQERITSTKNGSITSVQAVYVPADDLTDPAPATTFAHLDATTVLSRSIVELGIYPAVDPLESTSRMLDPRVVGEEHYKVARDVQEILQRYKELQDIIAILGMDELSEDDKLLVARARKIQRFLSQPFHVAEQFTGLPGRYVPVAETIQGFKEIIEGKHDDIPESYFLNAGNIDDVLARVKANK</sequence>
<name>ATPB_LACP7</name>
<accession>A9KK92</accession>
<feature type="chain" id="PRO_0000339523" description="ATP synthase subunit beta">
    <location>
        <begin position="1"/>
        <end position="472"/>
    </location>
</feature>
<feature type="binding site" evidence="1">
    <location>
        <begin position="160"/>
        <end position="167"/>
    </location>
    <ligand>
        <name>ATP</name>
        <dbReference type="ChEBI" id="CHEBI:30616"/>
    </ligand>
</feature>